<keyword id="KW-0012">Acyltransferase</keyword>
<keyword id="KW-0963">Cytoplasm</keyword>
<keyword id="KW-0275">Fatty acid biosynthesis</keyword>
<keyword id="KW-0276">Fatty acid metabolism</keyword>
<keyword id="KW-0444">Lipid biosynthesis</keyword>
<keyword id="KW-0443">Lipid metabolism</keyword>
<keyword id="KW-0511">Multifunctional enzyme</keyword>
<keyword id="KW-0808">Transferase</keyword>
<comment type="function">
    <text evidence="1">Catalyzes the condensation reaction of fatty acid synthesis by the addition to an acyl acceptor of two carbons from malonyl-ACP. Catalyzes the first condensation reaction which initiates fatty acid synthesis and may therefore play a role in governing the total rate of fatty acid production. Possesses both acetoacetyl-ACP synthase and acetyl transacylase activities. Its substrate specificity determines the biosynthesis of branched-chain and/or straight-chain of fatty acids.</text>
</comment>
<comment type="catalytic activity">
    <reaction evidence="1">
        <text>malonyl-[ACP] + acetyl-CoA + H(+) = 3-oxobutanoyl-[ACP] + CO2 + CoA</text>
        <dbReference type="Rhea" id="RHEA:12080"/>
        <dbReference type="Rhea" id="RHEA-COMP:9623"/>
        <dbReference type="Rhea" id="RHEA-COMP:9625"/>
        <dbReference type="ChEBI" id="CHEBI:15378"/>
        <dbReference type="ChEBI" id="CHEBI:16526"/>
        <dbReference type="ChEBI" id="CHEBI:57287"/>
        <dbReference type="ChEBI" id="CHEBI:57288"/>
        <dbReference type="ChEBI" id="CHEBI:78449"/>
        <dbReference type="ChEBI" id="CHEBI:78450"/>
        <dbReference type="EC" id="2.3.1.180"/>
    </reaction>
</comment>
<comment type="pathway">
    <text evidence="1">Lipid metabolism; fatty acid biosynthesis.</text>
</comment>
<comment type="subunit">
    <text evidence="1">Homodimer.</text>
</comment>
<comment type="subcellular location">
    <subcellularLocation>
        <location evidence="1">Cytoplasm</location>
    </subcellularLocation>
</comment>
<comment type="domain">
    <text evidence="1">The last Arg residue of the ACP-binding site is essential for the weak association between ACP/AcpP and FabH.</text>
</comment>
<comment type="similarity">
    <text evidence="1">Belongs to the thiolase-like superfamily. FabH family.</text>
</comment>
<accession>Q0STU9</accession>
<reference key="1">
    <citation type="journal article" date="2006" name="Genome Res.">
        <title>Skewed genomic variability in strains of the toxigenic bacterial pathogen, Clostridium perfringens.</title>
        <authorList>
            <person name="Myers G.S.A."/>
            <person name="Rasko D.A."/>
            <person name="Cheung J.K."/>
            <person name="Ravel J."/>
            <person name="Seshadri R."/>
            <person name="DeBoy R.T."/>
            <person name="Ren Q."/>
            <person name="Varga J."/>
            <person name="Awad M.M."/>
            <person name="Brinkac L.M."/>
            <person name="Daugherty S.C."/>
            <person name="Haft D.H."/>
            <person name="Dodson R.J."/>
            <person name="Madupu R."/>
            <person name="Nelson W.C."/>
            <person name="Rosovitz M.J."/>
            <person name="Sullivan S.A."/>
            <person name="Khouri H."/>
            <person name="Dimitrov G.I."/>
            <person name="Watkins K.L."/>
            <person name="Mulligan S."/>
            <person name="Benton J."/>
            <person name="Radune D."/>
            <person name="Fisher D.J."/>
            <person name="Atkins H.S."/>
            <person name="Hiscox T."/>
            <person name="Jost B.H."/>
            <person name="Billington S.J."/>
            <person name="Songer J.G."/>
            <person name="McClane B.A."/>
            <person name="Titball R.W."/>
            <person name="Rood J.I."/>
            <person name="Melville S.B."/>
            <person name="Paulsen I.T."/>
        </authorList>
    </citation>
    <scope>NUCLEOTIDE SEQUENCE [LARGE SCALE GENOMIC DNA]</scope>
    <source>
        <strain>SM101 / Type A</strain>
    </source>
</reference>
<dbReference type="EC" id="2.3.1.180" evidence="1"/>
<dbReference type="EMBL" id="CP000312">
    <property type="protein sequence ID" value="ABG86514.1"/>
    <property type="molecule type" value="Genomic_DNA"/>
</dbReference>
<dbReference type="RefSeq" id="WP_011592147.1">
    <property type="nucleotide sequence ID" value="NC_008262.1"/>
</dbReference>
<dbReference type="SMR" id="Q0STU9"/>
<dbReference type="KEGG" id="cpr:CPR_1136"/>
<dbReference type="UniPathway" id="UPA00094"/>
<dbReference type="Proteomes" id="UP000001824">
    <property type="component" value="Chromosome"/>
</dbReference>
<dbReference type="GO" id="GO:0005737">
    <property type="term" value="C:cytoplasm"/>
    <property type="evidence" value="ECO:0007669"/>
    <property type="project" value="UniProtKB-SubCell"/>
</dbReference>
<dbReference type="GO" id="GO:0004315">
    <property type="term" value="F:3-oxoacyl-[acyl-carrier-protein] synthase activity"/>
    <property type="evidence" value="ECO:0007669"/>
    <property type="project" value="InterPro"/>
</dbReference>
<dbReference type="GO" id="GO:0033818">
    <property type="term" value="F:beta-ketoacyl-acyl-carrier-protein synthase III activity"/>
    <property type="evidence" value="ECO:0007669"/>
    <property type="project" value="UniProtKB-UniRule"/>
</dbReference>
<dbReference type="GO" id="GO:0006633">
    <property type="term" value="P:fatty acid biosynthetic process"/>
    <property type="evidence" value="ECO:0007669"/>
    <property type="project" value="UniProtKB-UniRule"/>
</dbReference>
<dbReference type="CDD" id="cd00830">
    <property type="entry name" value="KAS_III"/>
    <property type="match status" value="1"/>
</dbReference>
<dbReference type="FunFam" id="3.40.47.10:FF:000004">
    <property type="entry name" value="3-oxoacyl-[acyl-carrier-protein] synthase 3"/>
    <property type="match status" value="1"/>
</dbReference>
<dbReference type="Gene3D" id="3.40.47.10">
    <property type="match status" value="1"/>
</dbReference>
<dbReference type="HAMAP" id="MF_01815">
    <property type="entry name" value="FabH"/>
    <property type="match status" value="1"/>
</dbReference>
<dbReference type="InterPro" id="IPR013747">
    <property type="entry name" value="ACP_syn_III_C"/>
</dbReference>
<dbReference type="InterPro" id="IPR013751">
    <property type="entry name" value="ACP_syn_III_N"/>
</dbReference>
<dbReference type="InterPro" id="IPR004655">
    <property type="entry name" value="FabH"/>
</dbReference>
<dbReference type="InterPro" id="IPR016039">
    <property type="entry name" value="Thiolase-like"/>
</dbReference>
<dbReference type="NCBIfam" id="TIGR00747">
    <property type="entry name" value="fabH"/>
    <property type="match status" value="1"/>
</dbReference>
<dbReference type="NCBIfam" id="NF006829">
    <property type="entry name" value="PRK09352.1"/>
    <property type="match status" value="1"/>
</dbReference>
<dbReference type="PANTHER" id="PTHR43091">
    <property type="entry name" value="3-OXOACYL-[ACYL-CARRIER-PROTEIN] SYNTHASE"/>
    <property type="match status" value="1"/>
</dbReference>
<dbReference type="PANTHER" id="PTHR43091:SF1">
    <property type="entry name" value="BETA-KETOACYL-[ACYL-CARRIER-PROTEIN] SYNTHASE III, CHLOROPLASTIC"/>
    <property type="match status" value="1"/>
</dbReference>
<dbReference type="Pfam" id="PF08545">
    <property type="entry name" value="ACP_syn_III"/>
    <property type="match status" value="1"/>
</dbReference>
<dbReference type="Pfam" id="PF08541">
    <property type="entry name" value="ACP_syn_III_C"/>
    <property type="match status" value="1"/>
</dbReference>
<dbReference type="SUPFAM" id="SSF53901">
    <property type="entry name" value="Thiolase-like"/>
    <property type="match status" value="1"/>
</dbReference>
<proteinExistence type="inferred from homology"/>
<feature type="chain" id="PRO_1000056349" description="Beta-ketoacyl-[acyl-carrier-protein] synthase III">
    <location>
        <begin position="1"/>
        <end position="324"/>
    </location>
</feature>
<feature type="region of interest" description="ACP-binding" evidence="1">
    <location>
        <begin position="252"/>
        <end position="256"/>
    </location>
</feature>
<feature type="active site" evidence="1">
    <location>
        <position position="112"/>
    </location>
</feature>
<feature type="active site" evidence="1">
    <location>
        <position position="251"/>
    </location>
</feature>
<feature type="active site" evidence="1">
    <location>
        <position position="281"/>
    </location>
</feature>
<evidence type="ECO:0000255" key="1">
    <source>
        <dbReference type="HAMAP-Rule" id="MF_01815"/>
    </source>
</evidence>
<organism>
    <name type="scientific">Clostridium perfringens (strain SM101 / Type A)</name>
    <dbReference type="NCBI Taxonomy" id="289380"/>
    <lineage>
        <taxon>Bacteria</taxon>
        <taxon>Bacillati</taxon>
        <taxon>Bacillota</taxon>
        <taxon>Clostridia</taxon>
        <taxon>Eubacteriales</taxon>
        <taxon>Clostridiaceae</taxon>
        <taxon>Clostridium</taxon>
    </lineage>
</organism>
<gene>
    <name evidence="1" type="primary">fabH</name>
    <name type="ordered locus">CPR_1136</name>
</gene>
<sequence>MENAKIIGFGLYTPKNLVENERLQEFLETSDEWIRSRTGIERRYISLDENTSDLAVEASKKALNQAGLSAEEIDLIIVATVTPDNFTPSTACIVQDKLGAKNAWAFDINAACTGFIYALKLGRSLIRSGEAKNALIIGAETLSKALNWEDRGSCVLFGDGAGAIVLTSTEEDCGIKCVNVKSDGSKGDSLVIQGLPLNSPFKDGREVSKNYINMNGREIFKFATKVMEESIVEILEKENIKIEDISAIIPHQANLRIIDYVVKRLGIPREKFVTNLQNYGNTSGASIPIALCESINEGNLKKGDNIIMVGFGGGLTWGAALIKL</sequence>
<protein>
    <recommendedName>
        <fullName evidence="1">Beta-ketoacyl-[acyl-carrier-protein] synthase III</fullName>
        <shortName evidence="1">Beta-ketoacyl-ACP synthase III</shortName>
        <shortName evidence="1">KAS III</shortName>
        <ecNumber evidence="1">2.3.1.180</ecNumber>
    </recommendedName>
    <alternativeName>
        <fullName evidence="1">3-oxoacyl-[acyl-carrier-protein] synthase 3</fullName>
    </alternativeName>
    <alternativeName>
        <fullName evidence="1">3-oxoacyl-[acyl-carrier-protein] synthase III</fullName>
    </alternativeName>
</protein>
<name>FABH_CLOPS</name>